<name>TSAD_PICP2</name>
<evidence type="ECO:0000255" key="1">
    <source>
        <dbReference type="HAMAP-Rule" id="MF_01445"/>
    </source>
</evidence>
<accession>B1XJF0</accession>
<feature type="chain" id="PRO_1000146033" description="tRNA N6-adenosine threonylcarbamoyltransferase">
    <location>
        <begin position="1"/>
        <end position="355"/>
    </location>
</feature>
<feature type="binding site" evidence="1">
    <location>
        <position position="111"/>
    </location>
    <ligand>
        <name>Fe cation</name>
        <dbReference type="ChEBI" id="CHEBI:24875"/>
    </ligand>
</feature>
<feature type="binding site" evidence="1">
    <location>
        <position position="115"/>
    </location>
    <ligand>
        <name>Fe cation</name>
        <dbReference type="ChEBI" id="CHEBI:24875"/>
    </ligand>
</feature>
<feature type="binding site" evidence="1">
    <location>
        <begin position="134"/>
        <end position="138"/>
    </location>
    <ligand>
        <name>substrate</name>
    </ligand>
</feature>
<feature type="binding site" evidence="1">
    <location>
        <position position="167"/>
    </location>
    <ligand>
        <name>substrate</name>
    </ligand>
</feature>
<feature type="binding site" evidence="1">
    <location>
        <position position="180"/>
    </location>
    <ligand>
        <name>substrate</name>
    </ligand>
</feature>
<feature type="binding site" evidence="1">
    <location>
        <position position="184"/>
    </location>
    <ligand>
        <name>substrate</name>
    </ligand>
</feature>
<feature type="binding site" evidence="1">
    <location>
        <position position="279"/>
    </location>
    <ligand>
        <name>substrate</name>
    </ligand>
</feature>
<feature type="binding site" evidence="1">
    <location>
        <position position="307"/>
    </location>
    <ligand>
        <name>Fe cation</name>
        <dbReference type="ChEBI" id="CHEBI:24875"/>
    </ligand>
</feature>
<reference key="1">
    <citation type="submission" date="2008-02" db="EMBL/GenBank/DDBJ databases">
        <title>Complete sequence of Synechococcus sp. PCC 7002.</title>
        <authorList>
            <person name="Li T."/>
            <person name="Zhao J."/>
            <person name="Zhao C."/>
            <person name="Liu Z."/>
            <person name="Zhao F."/>
            <person name="Marquardt J."/>
            <person name="Nomura C.T."/>
            <person name="Persson S."/>
            <person name="Detter J.C."/>
            <person name="Richardson P.M."/>
            <person name="Lanz C."/>
            <person name="Schuster S.C."/>
            <person name="Wang J."/>
            <person name="Li S."/>
            <person name="Huang X."/>
            <person name="Cai T."/>
            <person name="Yu Z."/>
            <person name="Luo J."/>
            <person name="Zhao J."/>
            <person name="Bryant D.A."/>
        </authorList>
    </citation>
    <scope>NUCLEOTIDE SEQUENCE [LARGE SCALE GENOMIC DNA]</scope>
    <source>
        <strain>ATCC 27264 / PCC 7002 / PR-6</strain>
    </source>
</reference>
<sequence>MSIVLAIETSCDETAVAIVNNRKVLGNVVASQIDIHREFGGVVPEVASRHHLESINACIDTAFEQSGLSWSEIEAIATTCAPGLVGALLLGAAAGKTLAMIHNKPFIGVHHLEGHIYASYLSQPELEPPFLCLLVSGGHTSFIEVRGCGEYKLLGETRDDAAGEAFDKVARLLRVGYPGGPVIDRLAKTGDPQAFKLPEGRISLPGGGYHPYDCSFSGLKTAVLRLVQQFETQGKAVPVADIAASFQYTVAQALTKRAVRCAGDRQLQTIVVGGGVAANSGLRQILTAAAAEAGIQVYFPPLKFCTDNAAMIACAAAEHFQKGDRSRLDLPVASRLPITQVQTLYTPLVPLKGKS</sequence>
<dbReference type="EC" id="2.3.1.234" evidence="1"/>
<dbReference type="EMBL" id="CP000951">
    <property type="protein sequence ID" value="ACA99010.1"/>
    <property type="molecule type" value="Genomic_DNA"/>
</dbReference>
<dbReference type="RefSeq" id="WP_012306634.1">
    <property type="nucleotide sequence ID" value="NZ_JAHHPU010000001.1"/>
</dbReference>
<dbReference type="SMR" id="B1XJF0"/>
<dbReference type="STRING" id="32049.SYNPCC7002_A1007"/>
<dbReference type="KEGG" id="syp:SYNPCC7002_A1007"/>
<dbReference type="eggNOG" id="COG0533">
    <property type="taxonomic scope" value="Bacteria"/>
</dbReference>
<dbReference type="HOGENOM" id="CLU_023208_0_2_3"/>
<dbReference type="Proteomes" id="UP000001688">
    <property type="component" value="Chromosome"/>
</dbReference>
<dbReference type="GO" id="GO:0005737">
    <property type="term" value="C:cytoplasm"/>
    <property type="evidence" value="ECO:0007669"/>
    <property type="project" value="UniProtKB-SubCell"/>
</dbReference>
<dbReference type="GO" id="GO:0005506">
    <property type="term" value="F:iron ion binding"/>
    <property type="evidence" value="ECO:0007669"/>
    <property type="project" value="UniProtKB-UniRule"/>
</dbReference>
<dbReference type="GO" id="GO:0061711">
    <property type="term" value="F:N(6)-L-threonylcarbamoyladenine synthase activity"/>
    <property type="evidence" value="ECO:0007669"/>
    <property type="project" value="UniProtKB-EC"/>
</dbReference>
<dbReference type="GO" id="GO:0002949">
    <property type="term" value="P:tRNA threonylcarbamoyladenosine modification"/>
    <property type="evidence" value="ECO:0007669"/>
    <property type="project" value="UniProtKB-UniRule"/>
</dbReference>
<dbReference type="CDD" id="cd24133">
    <property type="entry name" value="ASKHA_NBD_TsaD_bac"/>
    <property type="match status" value="1"/>
</dbReference>
<dbReference type="FunFam" id="3.30.420.40:FF:000012">
    <property type="entry name" value="tRNA N6-adenosine threonylcarbamoyltransferase"/>
    <property type="match status" value="1"/>
</dbReference>
<dbReference type="FunFam" id="3.30.420.40:FF:000040">
    <property type="entry name" value="tRNA N6-adenosine threonylcarbamoyltransferase"/>
    <property type="match status" value="1"/>
</dbReference>
<dbReference type="Gene3D" id="3.30.420.40">
    <property type="match status" value="2"/>
</dbReference>
<dbReference type="HAMAP" id="MF_01445">
    <property type="entry name" value="TsaD"/>
    <property type="match status" value="1"/>
</dbReference>
<dbReference type="InterPro" id="IPR043129">
    <property type="entry name" value="ATPase_NBD"/>
</dbReference>
<dbReference type="InterPro" id="IPR000905">
    <property type="entry name" value="Gcp-like_dom"/>
</dbReference>
<dbReference type="InterPro" id="IPR017861">
    <property type="entry name" value="KAE1/TsaD"/>
</dbReference>
<dbReference type="InterPro" id="IPR017860">
    <property type="entry name" value="Peptidase_M22_CS"/>
</dbReference>
<dbReference type="InterPro" id="IPR022450">
    <property type="entry name" value="TsaD"/>
</dbReference>
<dbReference type="NCBIfam" id="TIGR00329">
    <property type="entry name" value="gcp_kae1"/>
    <property type="match status" value="1"/>
</dbReference>
<dbReference type="NCBIfam" id="TIGR03723">
    <property type="entry name" value="T6A_TsaD_YgjD"/>
    <property type="match status" value="1"/>
</dbReference>
<dbReference type="PANTHER" id="PTHR11735">
    <property type="entry name" value="TRNA N6-ADENOSINE THREONYLCARBAMOYLTRANSFERASE"/>
    <property type="match status" value="1"/>
</dbReference>
<dbReference type="PANTHER" id="PTHR11735:SF6">
    <property type="entry name" value="TRNA N6-ADENOSINE THREONYLCARBAMOYLTRANSFERASE, MITOCHONDRIAL"/>
    <property type="match status" value="1"/>
</dbReference>
<dbReference type="Pfam" id="PF00814">
    <property type="entry name" value="TsaD"/>
    <property type="match status" value="1"/>
</dbReference>
<dbReference type="PRINTS" id="PR00789">
    <property type="entry name" value="OSIALOPTASE"/>
</dbReference>
<dbReference type="SUPFAM" id="SSF53067">
    <property type="entry name" value="Actin-like ATPase domain"/>
    <property type="match status" value="2"/>
</dbReference>
<dbReference type="PROSITE" id="PS01016">
    <property type="entry name" value="GLYCOPROTEASE"/>
    <property type="match status" value="1"/>
</dbReference>
<gene>
    <name evidence="1" type="primary">tsaD</name>
    <name type="synonym">gcp</name>
    <name type="ordered locus">SYNPCC7002_A1007</name>
</gene>
<comment type="function">
    <text evidence="1">Required for the formation of a threonylcarbamoyl group on adenosine at position 37 (t(6)A37) in tRNAs that read codons beginning with adenine. Is involved in the transfer of the threonylcarbamoyl moiety of threonylcarbamoyl-AMP (TC-AMP) to the N6 group of A37, together with TsaE and TsaB. TsaD likely plays a direct catalytic role in this reaction.</text>
</comment>
<comment type="catalytic activity">
    <reaction evidence="1">
        <text>L-threonylcarbamoyladenylate + adenosine(37) in tRNA = N(6)-L-threonylcarbamoyladenosine(37) in tRNA + AMP + H(+)</text>
        <dbReference type="Rhea" id="RHEA:37059"/>
        <dbReference type="Rhea" id="RHEA-COMP:10162"/>
        <dbReference type="Rhea" id="RHEA-COMP:10163"/>
        <dbReference type="ChEBI" id="CHEBI:15378"/>
        <dbReference type="ChEBI" id="CHEBI:73682"/>
        <dbReference type="ChEBI" id="CHEBI:74411"/>
        <dbReference type="ChEBI" id="CHEBI:74418"/>
        <dbReference type="ChEBI" id="CHEBI:456215"/>
        <dbReference type="EC" id="2.3.1.234"/>
    </reaction>
</comment>
<comment type="cofactor">
    <cofactor evidence="1">
        <name>Fe(2+)</name>
        <dbReference type="ChEBI" id="CHEBI:29033"/>
    </cofactor>
    <text evidence="1">Binds 1 Fe(2+) ion per subunit.</text>
</comment>
<comment type="subcellular location">
    <subcellularLocation>
        <location evidence="1">Cytoplasm</location>
    </subcellularLocation>
</comment>
<comment type="similarity">
    <text evidence="1">Belongs to the KAE1 / TsaD family.</text>
</comment>
<protein>
    <recommendedName>
        <fullName evidence="1">tRNA N6-adenosine threonylcarbamoyltransferase</fullName>
        <ecNumber evidence="1">2.3.1.234</ecNumber>
    </recommendedName>
    <alternativeName>
        <fullName evidence="1">N6-L-threonylcarbamoyladenine synthase</fullName>
        <shortName evidence="1">t(6)A synthase</shortName>
    </alternativeName>
    <alternativeName>
        <fullName evidence="1">t(6)A37 threonylcarbamoyladenosine biosynthesis protein TsaD</fullName>
    </alternativeName>
    <alternativeName>
        <fullName evidence="1">tRNA threonylcarbamoyladenosine biosynthesis protein TsaD</fullName>
    </alternativeName>
</protein>
<keyword id="KW-0012">Acyltransferase</keyword>
<keyword id="KW-0963">Cytoplasm</keyword>
<keyword id="KW-0408">Iron</keyword>
<keyword id="KW-0479">Metal-binding</keyword>
<keyword id="KW-1185">Reference proteome</keyword>
<keyword id="KW-0808">Transferase</keyword>
<keyword id="KW-0819">tRNA processing</keyword>
<organism>
    <name type="scientific">Picosynechococcus sp. (strain ATCC 27264 / PCC 7002 / PR-6)</name>
    <name type="common">Agmenellum quadruplicatum</name>
    <dbReference type="NCBI Taxonomy" id="32049"/>
    <lineage>
        <taxon>Bacteria</taxon>
        <taxon>Bacillati</taxon>
        <taxon>Cyanobacteriota</taxon>
        <taxon>Cyanophyceae</taxon>
        <taxon>Oscillatoriophycideae</taxon>
        <taxon>Chroococcales</taxon>
        <taxon>Geminocystaceae</taxon>
        <taxon>Picosynechococcus</taxon>
    </lineage>
</organism>
<proteinExistence type="inferred from homology"/>